<sequence length="130" mass="13900">MARPARRTVRRSERKNVEKGIAHIHSTFNNTIVTITDPSGNAIAWASAGTCGFSGTKKGTPFAAQLAAEKAAKMAMDHGMRTVEVYVKGPGAGREAAIRALQAAGLEVTLIKDVTPIPHNGCRPPKRRRV</sequence>
<keyword id="KW-0687">Ribonucleoprotein</keyword>
<keyword id="KW-0689">Ribosomal protein</keyword>
<keyword id="KW-0694">RNA-binding</keyword>
<keyword id="KW-0699">rRNA-binding</keyword>
<dbReference type="EMBL" id="CP001393">
    <property type="protein sequence ID" value="ACM60813.1"/>
    <property type="molecule type" value="Genomic_DNA"/>
</dbReference>
<dbReference type="RefSeq" id="WP_011917765.1">
    <property type="nucleotide sequence ID" value="NC_012034.1"/>
</dbReference>
<dbReference type="SMR" id="B9MKF5"/>
<dbReference type="STRING" id="521460.Athe_1719"/>
<dbReference type="GeneID" id="31773076"/>
<dbReference type="KEGG" id="ate:Athe_1719"/>
<dbReference type="eggNOG" id="COG0100">
    <property type="taxonomic scope" value="Bacteria"/>
</dbReference>
<dbReference type="HOGENOM" id="CLU_072439_5_0_9"/>
<dbReference type="Proteomes" id="UP000007723">
    <property type="component" value="Chromosome"/>
</dbReference>
<dbReference type="GO" id="GO:1990904">
    <property type="term" value="C:ribonucleoprotein complex"/>
    <property type="evidence" value="ECO:0007669"/>
    <property type="project" value="UniProtKB-KW"/>
</dbReference>
<dbReference type="GO" id="GO:0005840">
    <property type="term" value="C:ribosome"/>
    <property type="evidence" value="ECO:0007669"/>
    <property type="project" value="UniProtKB-KW"/>
</dbReference>
<dbReference type="GO" id="GO:0019843">
    <property type="term" value="F:rRNA binding"/>
    <property type="evidence" value="ECO:0007669"/>
    <property type="project" value="UniProtKB-UniRule"/>
</dbReference>
<dbReference type="GO" id="GO:0003735">
    <property type="term" value="F:structural constituent of ribosome"/>
    <property type="evidence" value="ECO:0007669"/>
    <property type="project" value="InterPro"/>
</dbReference>
<dbReference type="GO" id="GO:0006412">
    <property type="term" value="P:translation"/>
    <property type="evidence" value="ECO:0007669"/>
    <property type="project" value="UniProtKB-UniRule"/>
</dbReference>
<dbReference type="FunFam" id="3.30.420.80:FF:000001">
    <property type="entry name" value="30S ribosomal protein S11"/>
    <property type="match status" value="1"/>
</dbReference>
<dbReference type="Gene3D" id="3.30.420.80">
    <property type="entry name" value="Ribosomal protein S11"/>
    <property type="match status" value="1"/>
</dbReference>
<dbReference type="HAMAP" id="MF_01310">
    <property type="entry name" value="Ribosomal_uS11"/>
    <property type="match status" value="1"/>
</dbReference>
<dbReference type="InterPro" id="IPR001971">
    <property type="entry name" value="Ribosomal_uS11"/>
</dbReference>
<dbReference type="InterPro" id="IPR019981">
    <property type="entry name" value="Ribosomal_uS11_bac-type"/>
</dbReference>
<dbReference type="InterPro" id="IPR018102">
    <property type="entry name" value="Ribosomal_uS11_CS"/>
</dbReference>
<dbReference type="InterPro" id="IPR036967">
    <property type="entry name" value="Ribosomal_uS11_sf"/>
</dbReference>
<dbReference type="NCBIfam" id="NF003698">
    <property type="entry name" value="PRK05309.1"/>
    <property type="match status" value="1"/>
</dbReference>
<dbReference type="NCBIfam" id="TIGR03632">
    <property type="entry name" value="uS11_bact"/>
    <property type="match status" value="1"/>
</dbReference>
<dbReference type="PANTHER" id="PTHR11759">
    <property type="entry name" value="40S RIBOSOMAL PROTEIN S14/30S RIBOSOMAL PROTEIN S11"/>
    <property type="match status" value="1"/>
</dbReference>
<dbReference type="Pfam" id="PF00411">
    <property type="entry name" value="Ribosomal_S11"/>
    <property type="match status" value="1"/>
</dbReference>
<dbReference type="PIRSF" id="PIRSF002131">
    <property type="entry name" value="Ribosomal_S11"/>
    <property type="match status" value="1"/>
</dbReference>
<dbReference type="SUPFAM" id="SSF53137">
    <property type="entry name" value="Translational machinery components"/>
    <property type="match status" value="1"/>
</dbReference>
<dbReference type="PROSITE" id="PS00054">
    <property type="entry name" value="RIBOSOMAL_S11"/>
    <property type="match status" value="1"/>
</dbReference>
<reference key="1">
    <citation type="submission" date="2009-01" db="EMBL/GenBank/DDBJ databases">
        <title>Complete sequence of chromosome of Caldicellulosiruptor becscii DSM 6725.</title>
        <authorList>
            <person name="Lucas S."/>
            <person name="Copeland A."/>
            <person name="Lapidus A."/>
            <person name="Glavina del Rio T."/>
            <person name="Tice H."/>
            <person name="Bruce D."/>
            <person name="Goodwin L."/>
            <person name="Pitluck S."/>
            <person name="Sims D."/>
            <person name="Meincke L."/>
            <person name="Brettin T."/>
            <person name="Detter J.C."/>
            <person name="Han C."/>
            <person name="Larimer F."/>
            <person name="Land M."/>
            <person name="Hauser L."/>
            <person name="Kyrpides N."/>
            <person name="Ovchinnikova G."/>
            <person name="Kataeva I."/>
            <person name="Adams M.W.W."/>
        </authorList>
    </citation>
    <scope>NUCLEOTIDE SEQUENCE [LARGE SCALE GENOMIC DNA]</scope>
    <source>
        <strain>ATCC BAA-1888 / DSM 6725 / KCTC 15123 / Z-1320</strain>
    </source>
</reference>
<evidence type="ECO:0000255" key="1">
    <source>
        <dbReference type="HAMAP-Rule" id="MF_01310"/>
    </source>
</evidence>
<evidence type="ECO:0000305" key="2"/>
<feature type="chain" id="PRO_1000165525" description="Small ribosomal subunit protein uS11">
    <location>
        <begin position="1"/>
        <end position="130"/>
    </location>
</feature>
<gene>
    <name evidence="1" type="primary">rpsK</name>
    <name type="ordered locus">Athe_1719</name>
</gene>
<protein>
    <recommendedName>
        <fullName evidence="1">Small ribosomal subunit protein uS11</fullName>
    </recommendedName>
    <alternativeName>
        <fullName evidence="2">30S ribosomal protein S11</fullName>
    </alternativeName>
</protein>
<name>RS11_CALBD</name>
<accession>B9MKF5</accession>
<organism>
    <name type="scientific">Caldicellulosiruptor bescii (strain ATCC BAA-1888 / DSM 6725 / KCTC 15123 / Z-1320)</name>
    <name type="common">Anaerocellum thermophilum</name>
    <dbReference type="NCBI Taxonomy" id="521460"/>
    <lineage>
        <taxon>Bacteria</taxon>
        <taxon>Bacillati</taxon>
        <taxon>Bacillota</taxon>
        <taxon>Bacillota incertae sedis</taxon>
        <taxon>Caldicellulosiruptorales</taxon>
        <taxon>Caldicellulosiruptoraceae</taxon>
        <taxon>Caldicellulosiruptor</taxon>
    </lineage>
</organism>
<proteinExistence type="inferred from homology"/>
<comment type="function">
    <text evidence="1">Located on the platform of the 30S subunit, it bridges several disparate RNA helices of the 16S rRNA. Forms part of the Shine-Dalgarno cleft in the 70S ribosome.</text>
</comment>
<comment type="subunit">
    <text evidence="1">Part of the 30S ribosomal subunit. Interacts with proteins S7 and S18. Binds to IF-3.</text>
</comment>
<comment type="similarity">
    <text evidence="1">Belongs to the universal ribosomal protein uS11 family.</text>
</comment>